<evidence type="ECO:0000250" key="1"/>
<evidence type="ECO:0000255" key="2"/>
<evidence type="ECO:0000305" key="3"/>
<keyword id="KW-0119">Carbohydrate metabolism</keyword>
<keyword id="KW-0325">Glycoprotein</keyword>
<keyword id="KW-0326">Glycosidase</keyword>
<keyword id="KW-0378">Hydrolase</keyword>
<keyword id="KW-0624">Polysaccharide degradation</keyword>
<keyword id="KW-1185">Reference proteome</keyword>
<keyword id="KW-0964">Secreted</keyword>
<keyword id="KW-0732">Signal</keyword>
<accession>A2QQ94</accession>
<name>ABFC_ASPNC</name>
<sequence>MTTFTKLSDQDAPSISIHPARRLSKINPNIYAGFTEHMGRCIYGGIYDPGNSLSDENGFRKDVLEALKELNIPVVRYPGGNFMATYHWIDGVGPKEKRPARPELAWLGTETNQFGTDEFLKWCEVLGTEPYFCLNFGTGTLDEALAWVEYCNGTKDTYYANLRRKNGREEPYNVKYWALGNETWGPWQVEQMTKEAYAHKAYQWAKALKLLDPSLILILCGQDGTASWDYYTLKQCLLPAHSPLSTSTVPLIDMHSIHLYTSSPSHLPNVTAPLAAERAIEITSSLIDLARIENGVPPDQHRPTICFDEWNVWDPIRAEGSKGAEESYTLSDALAVAVFLNVFVRKSKDLGMACIAQSVNVISPLMTSKDGITKQTTYWPLYLFSKYMRGWTISVHLSCASYEGETSPKWVRGVKDTPWLDVSATLGEDGYVNVAVVNIHEEKDIRSSIDGPSGTVSVFTVTGERVQACNMNGKEEVAVTESTWEAREQFVFPKHSLTLLRWKLA</sequence>
<protein>
    <recommendedName>
        <fullName>Probable alpha-L-arabinofuranosidase C</fullName>
        <shortName>ABF C</shortName>
        <shortName>Arabinosidase C</shortName>
        <ecNumber>3.2.1.55</ecNumber>
    </recommendedName>
</protein>
<dbReference type="EC" id="3.2.1.55"/>
<dbReference type="EMBL" id="AM270160">
    <property type="protein sequence ID" value="CAK39851.1"/>
    <property type="molecule type" value="Genomic_DNA"/>
</dbReference>
<dbReference type="RefSeq" id="XP_001392290.1">
    <property type="nucleotide sequence ID" value="XM_001392253.1"/>
</dbReference>
<dbReference type="SMR" id="A2QQ94"/>
<dbReference type="CAZy" id="GH51">
    <property type="family name" value="Glycoside Hydrolase Family 51"/>
</dbReference>
<dbReference type="GlyCosmos" id="A2QQ94">
    <property type="glycosylation" value="3 sites, No reported glycans"/>
</dbReference>
<dbReference type="EnsemblFungi" id="CAK39851">
    <property type="protein sequence ID" value="CAK39851"/>
    <property type="gene ID" value="An08g01710"/>
</dbReference>
<dbReference type="GeneID" id="4982486"/>
<dbReference type="KEGG" id="ang:An08g01710"/>
<dbReference type="VEuPathDB" id="FungiDB:An08g01710"/>
<dbReference type="HOGENOM" id="CLU_017810_1_0_1"/>
<dbReference type="UniPathway" id="UPA00667"/>
<dbReference type="Proteomes" id="UP000006706">
    <property type="component" value="Chromosome 8R"/>
</dbReference>
<dbReference type="GO" id="GO:0005576">
    <property type="term" value="C:extracellular region"/>
    <property type="evidence" value="ECO:0007669"/>
    <property type="project" value="UniProtKB-SubCell"/>
</dbReference>
<dbReference type="GO" id="GO:0046556">
    <property type="term" value="F:alpha-L-arabinofuranosidase activity"/>
    <property type="evidence" value="ECO:0007669"/>
    <property type="project" value="UniProtKB-EC"/>
</dbReference>
<dbReference type="GO" id="GO:0031222">
    <property type="term" value="P:arabinan catabolic process"/>
    <property type="evidence" value="ECO:0007669"/>
    <property type="project" value="UniProtKB-UniPathway"/>
</dbReference>
<dbReference type="GO" id="GO:0046373">
    <property type="term" value="P:L-arabinose metabolic process"/>
    <property type="evidence" value="ECO:0007669"/>
    <property type="project" value="InterPro"/>
</dbReference>
<dbReference type="FunFam" id="3.20.20.80:FF:000110">
    <property type="entry name" value="Alpha-L-arabinofuranosidase C"/>
    <property type="match status" value="1"/>
</dbReference>
<dbReference type="Gene3D" id="3.20.20.80">
    <property type="entry name" value="Glycosidases"/>
    <property type="match status" value="1"/>
</dbReference>
<dbReference type="Gene3D" id="2.60.40.1180">
    <property type="entry name" value="Golgi alpha-mannosidase II"/>
    <property type="match status" value="1"/>
</dbReference>
<dbReference type="InterPro" id="IPR010720">
    <property type="entry name" value="Alpha-L-AF_C"/>
</dbReference>
<dbReference type="InterPro" id="IPR013780">
    <property type="entry name" value="Glyco_hydro_b"/>
</dbReference>
<dbReference type="InterPro" id="IPR017853">
    <property type="entry name" value="Glycoside_hydrolase_SF"/>
</dbReference>
<dbReference type="PANTHER" id="PTHR43576:SF3">
    <property type="entry name" value="ALPHA-L-ARABINOFURANOSIDASE C"/>
    <property type="match status" value="1"/>
</dbReference>
<dbReference type="PANTHER" id="PTHR43576">
    <property type="entry name" value="ALPHA-L-ARABINOFURANOSIDASE C-RELATED"/>
    <property type="match status" value="1"/>
</dbReference>
<dbReference type="Pfam" id="PF06964">
    <property type="entry name" value="Alpha-L-AF_C"/>
    <property type="match status" value="1"/>
</dbReference>
<dbReference type="SMART" id="SM00813">
    <property type="entry name" value="Alpha-L-AF_C"/>
    <property type="match status" value="1"/>
</dbReference>
<dbReference type="SUPFAM" id="SSF51445">
    <property type="entry name" value="(Trans)glycosidases"/>
    <property type="match status" value="1"/>
</dbReference>
<dbReference type="SUPFAM" id="SSF51011">
    <property type="entry name" value="Glycosyl hydrolase domain"/>
    <property type="match status" value="1"/>
</dbReference>
<feature type="signal peptide" evidence="2">
    <location>
        <begin position="1"/>
        <end status="unknown"/>
    </location>
</feature>
<feature type="chain" id="PRO_0000394614" description="Probable alpha-L-arabinofuranosidase C">
    <location>
        <begin status="unknown"/>
        <end position="505"/>
    </location>
</feature>
<feature type="glycosylation site" description="N-linked (GlcNAc...) asparagine" evidence="2">
    <location>
        <position position="152"/>
    </location>
</feature>
<feature type="glycosylation site" description="N-linked (GlcNAc...) asparagine" evidence="2">
    <location>
        <position position="181"/>
    </location>
</feature>
<feature type="glycosylation site" description="N-linked (GlcNAc...) asparagine" evidence="2">
    <location>
        <position position="269"/>
    </location>
</feature>
<reference key="1">
    <citation type="journal article" date="2007" name="Nat. Biotechnol.">
        <title>Genome sequencing and analysis of the versatile cell factory Aspergillus niger CBS 513.88.</title>
        <authorList>
            <person name="Pel H.J."/>
            <person name="de Winde J.H."/>
            <person name="Archer D.B."/>
            <person name="Dyer P.S."/>
            <person name="Hofmann G."/>
            <person name="Schaap P.J."/>
            <person name="Turner G."/>
            <person name="de Vries R.P."/>
            <person name="Albang R."/>
            <person name="Albermann K."/>
            <person name="Andersen M.R."/>
            <person name="Bendtsen J.D."/>
            <person name="Benen J.A.E."/>
            <person name="van den Berg M."/>
            <person name="Breestraat S."/>
            <person name="Caddick M.X."/>
            <person name="Contreras R."/>
            <person name="Cornell M."/>
            <person name="Coutinho P.M."/>
            <person name="Danchin E.G.J."/>
            <person name="Debets A.J.M."/>
            <person name="Dekker P."/>
            <person name="van Dijck P.W.M."/>
            <person name="van Dijk A."/>
            <person name="Dijkhuizen L."/>
            <person name="Driessen A.J.M."/>
            <person name="d'Enfert C."/>
            <person name="Geysens S."/>
            <person name="Goosen C."/>
            <person name="Groot G.S.P."/>
            <person name="de Groot P.W.J."/>
            <person name="Guillemette T."/>
            <person name="Henrissat B."/>
            <person name="Herweijer M."/>
            <person name="van den Hombergh J.P.T.W."/>
            <person name="van den Hondel C.A.M.J.J."/>
            <person name="van der Heijden R.T.J.M."/>
            <person name="van der Kaaij R.M."/>
            <person name="Klis F.M."/>
            <person name="Kools H.J."/>
            <person name="Kubicek C.P."/>
            <person name="van Kuyk P.A."/>
            <person name="Lauber J."/>
            <person name="Lu X."/>
            <person name="van der Maarel M.J.E.C."/>
            <person name="Meulenberg R."/>
            <person name="Menke H."/>
            <person name="Mortimer M.A."/>
            <person name="Nielsen J."/>
            <person name="Oliver S.G."/>
            <person name="Olsthoorn M."/>
            <person name="Pal K."/>
            <person name="van Peij N.N.M.E."/>
            <person name="Ram A.F.J."/>
            <person name="Rinas U."/>
            <person name="Roubos J.A."/>
            <person name="Sagt C.M.J."/>
            <person name="Schmoll M."/>
            <person name="Sun J."/>
            <person name="Ussery D."/>
            <person name="Varga J."/>
            <person name="Vervecken W."/>
            <person name="van de Vondervoort P.J.J."/>
            <person name="Wedler H."/>
            <person name="Woesten H.A.B."/>
            <person name="Zeng A.-P."/>
            <person name="van Ooyen A.J.J."/>
            <person name="Visser J."/>
            <person name="Stam H."/>
        </authorList>
    </citation>
    <scope>NUCLEOTIDE SEQUENCE [LARGE SCALE GENOMIC DNA]</scope>
    <source>
        <strain>ATCC MYA-4892 / CBS 513.88 / FGSC A1513</strain>
    </source>
</reference>
<proteinExistence type="inferred from homology"/>
<organism>
    <name type="scientific">Aspergillus niger (strain ATCC MYA-4892 / CBS 513.88 / FGSC A1513)</name>
    <dbReference type="NCBI Taxonomy" id="425011"/>
    <lineage>
        <taxon>Eukaryota</taxon>
        <taxon>Fungi</taxon>
        <taxon>Dikarya</taxon>
        <taxon>Ascomycota</taxon>
        <taxon>Pezizomycotina</taxon>
        <taxon>Eurotiomycetes</taxon>
        <taxon>Eurotiomycetidae</taxon>
        <taxon>Eurotiales</taxon>
        <taxon>Aspergillaceae</taxon>
        <taxon>Aspergillus</taxon>
        <taxon>Aspergillus subgen. Circumdati</taxon>
    </lineage>
</organism>
<comment type="function">
    <text evidence="1">Alpha-L-arabinofuranosidase involved in the degradation of arabinoxylan, a major component of plant hemicellulose. Acts only on small linear 1,5-alpha-linked L-arabinofuranosyl oligosaccharides (By similarity).</text>
</comment>
<comment type="catalytic activity">
    <reaction>
        <text>Hydrolysis of terminal non-reducing alpha-L-arabinofuranoside residues in alpha-L-arabinosides.</text>
        <dbReference type="EC" id="3.2.1.55"/>
    </reaction>
</comment>
<comment type="pathway">
    <text>Glycan metabolism; L-arabinan degradation.</text>
</comment>
<comment type="subcellular location">
    <subcellularLocation>
        <location evidence="1">Secreted</location>
    </subcellularLocation>
</comment>
<comment type="similarity">
    <text evidence="3">Belongs to the glycosyl hydrolase 51 family.</text>
</comment>
<gene>
    <name type="primary">abfC</name>
    <name type="ORF">An08g01710</name>
</gene>